<sequence>MSIILGIDPGSRVTGYGVIRQTGKHLEYLGSGAIRTQVEDLPTRLKRIYAGVTEIITQFQPNMFAIEQVFMAKNADSALKLGQARGTAIVAAVNNDLPVFEYAARLVKQTVVGIGSADKVQVQEMVTRILKLSDKPQADAADALAIAITHAHSIQHSLHIANSVKMTETQEKMTALLKTRYSRGRFRLKI</sequence>
<comment type="function">
    <text evidence="1">The RuvA-RuvB-RuvC complex processes Holliday junction (HJ) DNA during genetic recombination and DNA repair. Endonuclease that resolves HJ intermediates. Cleaves cruciform DNA by making single-stranded nicks across the HJ at symmetrical positions within the homologous arms, yielding a 5'-phosphate and a 3'-hydroxyl group; requires a central core of homology in the junction. The consensus cleavage sequence is 5'-(A/T)TT(C/G)-3'. Cleavage occurs on the 3'-side of the TT dinucleotide at the point of strand exchange. HJ branch migration catalyzed by RuvA-RuvB allows RuvC to scan DNA until it finds its consensus sequence, where it cleaves and resolves the cruciform DNA.</text>
</comment>
<comment type="catalytic activity">
    <reaction evidence="1">
        <text>Endonucleolytic cleavage at a junction such as a reciprocal single-stranded crossover between two homologous DNA duplexes (Holliday junction).</text>
        <dbReference type="EC" id="3.1.21.10"/>
    </reaction>
</comment>
<comment type="cofactor">
    <cofactor evidence="1">
        <name>Mg(2+)</name>
        <dbReference type="ChEBI" id="CHEBI:18420"/>
    </cofactor>
    <text evidence="1">Binds 2 Mg(2+) ion per subunit.</text>
</comment>
<comment type="subunit">
    <text evidence="1">Homodimer which binds Holliday junction (HJ) DNA. The HJ becomes 2-fold symmetrical on binding to RuvC with unstacked arms; it has a different conformation from HJ DNA in complex with RuvA. In the full resolvosome a probable DNA-RuvA(4)-RuvB(12)-RuvC(2) complex forms which resolves the HJ.</text>
</comment>
<comment type="subcellular location">
    <subcellularLocation>
        <location evidence="1">Cytoplasm</location>
    </subcellularLocation>
</comment>
<comment type="similarity">
    <text evidence="1 2">Belongs to the RuvC family.</text>
</comment>
<reference key="1">
    <citation type="journal article" date="1995" name="Science">
        <title>Whole-genome random sequencing and assembly of Haemophilus influenzae Rd.</title>
        <authorList>
            <person name="Fleischmann R.D."/>
            <person name="Adams M.D."/>
            <person name="White O."/>
            <person name="Clayton R.A."/>
            <person name="Kirkness E.F."/>
            <person name="Kerlavage A.R."/>
            <person name="Bult C.J."/>
            <person name="Tomb J.-F."/>
            <person name="Dougherty B.A."/>
            <person name="Merrick J.M."/>
            <person name="McKenney K."/>
            <person name="Sutton G.G."/>
            <person name="FitzHugh W."/>
            <person name="Fields C.A."/>
            <person name="Gocayne J.D."/>
            <person name="Scott J.D."/>
            <person name="Shirley R."/>
            <person name="Liu L.-I."/>
            <person name="Glodek A."/>
            <person name="Kelley J.M."/>
            <person name="Weidman J.F."/>
            <person name="Phillips C.A."/>
            <person name="Spriggs T."/>
            <person name="Hedblom E."/>
            <person name="Cotton M.D."/>
            <person name="Utterback T.R."/>
            <person name="Hanna M.C."/>
            <person name="Nguyen D.T."/>
            <person name="Saudek D.M."/>
            <person name="Brandon R.C."/>
            <person name="Fine L.D."/>
            <person name="Fritchman J.L."/>
            <person name="Fuhrmann J.L."/>
            <person name="Geoghagen N.S.M."/>
            <person name="Gnehm C.L."/>
            <person name="McDonald L.A."/>
            <person name="Small K.V."/>
            <person name="Fraser C.M."/>
            <person name="Smith H.O."/>
            <person name="Venter J.C."/>
        </authorList>
    </citation>
    <scope>NUCLEOTIDE SEQUENCE [LARGE SCALE GENOMIC DNA]</scope>
    <source>
        <strain>ATCC 51907 / DSM 11121 / KW20 / Rd</strain>
    </source>
</reference>
<dbReference type="EC" id="3.1.21.10" evidence="1"/>
<dbReference type="EMBL" id="L42023">
    <property type="protein sequence ID" value="AAC21978.1"/>
    <property type="molecule type" value="Genomic_DNA"/>
</dbReference>
<dbReference type="PIR" id="D64061">
    <property type="entry name" value="D64061"/>
</dbReference>
<dbReference type="RefSeq" id="NP_438480.1">
    <property type="nucleotide sequence ID" value="NC_000907.1"/>
</dbReference>
<dbReference type="SMR" id="P44633"/>
<dbReference type="STRING" id="71421.HI_0314"/>
<dbReference type="EnsemblBacteria" id="AAC21978">
    <property type="protein sequence ID" value="AAC21978"/>
    <property type="gene ID" value="HI_0314"/>
</dbReference>
<dbReference type="KEGG" id="hin:HI_0314"/>
<dbReference type="PATRIC" id="fig|71421.8.peg.331"/>
<dbReference type="eggNOG" id="COG0817">
    <property type="taxonomic scope" value="Bacteria"/>
</dbReference>
<dbReference type="HOGENOM" id="CLU_091257_2_1_6"/>
<dbReference type="OrthoDB" id="9805499at2"/>
<dbReference type="PhylomeDB" id="P44633"/>
<dbReference type="BioCyc" id="HINF71421:G1GJ1-331-MONOMER"/>
<dbReference type="Proteomes" id="UP000000579">
    <property type="component" value="Chromosome"/>
</dbReference>
<dbReference type="GO" id="GO:0005737">
    <property type="term" value="C:cytoplasm"/>
    <property type="evidence" value="ECO:0007669"/>
    <property type="project" value="UniProtKB-SubCell"/>
</dbReference>
<dbReference type="GO" id="GO:0048476">
    <property type="term" value="C:Holliday junction resolvase complex"/>
    <property type="evidence" value="ECO:0007669"/>
    <property type="project" value="UniProtKB-UniRule"/>
</dbReference>
<dbReference type="GO" id="GO:0008821">
    <property type="term" value="F:crossover junction DNA endonuclease activity"/>
    <property type="evidence" value="ECO:0007669"/>
    <property type="project" value="UniProtKB-UniRule"/>
</dbReference>
<dbReference type="GO" id="GO:0003677">
    <property type="term" value="F:DNA binding"/>
    <property type="evidence" value="ECO:0007669"/>
    <property type="project" value="UniProtKB-KW"/>
</dbReference>
<dbReference type="GO" id="GO:0000287">
    <property type="term" value="F:magnesium ion binding"/>
    <property type="evidence" value="ECO:0007669"/>
    <property type="project" value="UniProtKB-UniRule"/>
</dbReference>
<dbReference type="GO" id="GO:0006310">
    <property type="term" value="P:DNA recombination"/>
    <property type="evidence" value="ECO:0007669"/>
    <property type="project" value="UniProtKB-UniRule"/>
</dbReference>
<dbReference type="GO" id="GO:0006281">
    <property type="term" value="P:DNA repair"/>
    <property type="evidence" value="ECO:0007669"/>
    <property type="project" value="UniProtKB-UniRule"/>
</dbReference>
<dbReference type="CDD" id="cd16962">
    <property type="entry name" value="RuvC"/>
    <property type="match status" value="1"/>
</dbReference>
<dbReference type="FunFam" id="3.30.420.10:FF:000002">
    <property type="entry name" value="Crossover junction endodeoxyribonuclease RuvC"/>
    <property type="match status" value="1"/>
</dbReference>
<dbReference type="Gene3D" id="3.30.420.10">
    <property type="entry name" value="Ribonuclease H-like superfamily/Ribonuclease H"/>
    <property type="match status" value="1"/>
</dbReference>
<dbReference type="HAMAP" id="MF_00034">
    <property type="entry name" value="RuvC"/>
    <property type="match status" value="1"/>
</dbReference>
<dbReference type="InterPro" id="IPR012337">
    <property type="entry name" value="RNaseH-like_sf"/>
</dbReference>
<dbReference type="InterPro" id="IPR036397">
    <property type="entry name" value="RNaseH_sf"/>
</dbReference>
<dbReference type="InterPro" id="IPR020563">
    <property type="entry name" value="X-over_junc_endoDNase_Mg_BS"/>
</dbReference>
<dbReference type="InterPro" id="IPR002176">
    <property type="entry name" value="X-over_junc_endoDNase_RuvC"/>
</dbReference>
<dbReference type="NCBIfam" id="TIGR00228">
    <property type="entry name" value="ruvC"/>
    <property type="match status" value="1"/>
</dbReference>
<dbReference type="PANTHER" id="PTHR30194">
    <property type="entry name" value="CROSSOVER JUNCTION ENDODEOXYRIBONUCLEASE RUVC"/>
    <property type="match status" value="1"/>
</dbReference>
<dbReference type="PANTHER" id="PTHR30194:SF3">
    <property type="entry name" value="CROSSOVER JUNCTION ENDODEOXYRIBONUCLEASE RUVC"/>
    <property type="match status" value="1"/>
</dbReference>
<dbReference type="Pfam" id="PF02075">
    <property type="entry name" value="RuvC"/>
    <property type="match status" value="1"/>
</dbReference>
<dbReference type="PRINTS" id="PR00696">
    <property type="entry name" value="RSOLVASERUVC"/>
</dbReference>
<dbReference type="SUPFAM" id="SSF53098">
    <property type="entry name" value="Ribonuclease H-like"/>
    <property type="match status" value="1"/>
</dbReference>
<dbReference type="PROSITE" id="PS01321">
    <property type="entry name" value="RUVC"/>
    <property type="match status" value="1"/>
</dbReference>
<feature type="chain" id="PRO_0000183102" description="Crossover junction endodeoxyribonuclease RuvC">
    <location>
        <begin position="1"/>
        <end position="190"/>
    </location>
</feature>
<feature type="active site" evidence="1">
    <location>
        <position position="8"/>
    </location>
</feature>
<feature type="active site" evidence="1">
    <location>
        <position position="67"/>
    </location>
</feature>
<feature type="active site" evidence="1">
    <location>
        <position position="139"/>
    </location>
</feature>
<feature type="binding site" evidence="1">
    <location>
        <position position="8"/>
    </location>
    <ligand>
        <name>Mg(2+)</name>
        <dbReference type="ChEBI" id="CHEBI:18420"/>
        <label>1</label>
    </ligand>
</feature>
<feature type="binding site" evidence="1">
    <location>
        <position position="67"/>
    </location>
    <ligand>
        <name>Mg(2+)</name>
        <dbReference type="ChEBI" id="CHEBI:18420"/>
        <label>2</label>
    </ligand>
</feature>
<feature type="binding site" evidence="1">
    <location>
        <position position="139"/>
    </location>
    <ligand>
        <name>Mg(2+)</name>
        <dbReference type="ChEBI" id="CHEBI:18420"/>
        <label>1</label>
    </ligand>
</feature>
<accession>P44633</accession>
<protein>
    <recommendedName>
        <fullName evidence="1">Crossover junction endodeoxyribonuclease RuvC</fullName>
        <ecNumber evidence="1">3.1.21.10</ecNumber>
    </recommendedName>
    <alternativeName>
        <fullName evidence="1">Holliday junction nuclease RuvC</fullName>
    </alternativeName>
    <alternativeName>
        <fullName evidence="1">Holliday junction resolvase RuvC</fullName>
    </alternativeName>
</protein>
<proteinExistence type="inferred from homology"/>
<gene>
    <name evidence="1" type="primary">ruvC</name>
    <name type="ordered locus">HI_0314</name>
</gene>
<name>RUVC_HAEIN</name>
<organism>
    <name type="scientific">Haemophilus influenzae (strain ATCC 51907 / DSM 11121 / KW20 / Rd)</name>
    <dbReference type="NCBI Taxonomy" id="71421"/>
    <lineage>
        <taxon>Bacteria</taxon>
        <taxon>Pseudomonadati</taxon>
        <taxon>Pseudomonadota</taxon>
        <taxon>Gammaproteobacteria</taxon>
        <taxon>Pasteurellales</taxon>
        <taxon>Pasteurellaceae</taxon>
        <taxon>Haemophilus</taxon>
    </lineage>
</organism>
<evidence type="ECO:0000255" key="1">
    <source>
        <dbReference type="HAMAP-Rule" id="MF_00034"/>
    </source>
</evidence>
<evidence type="ECO:0000305" key="2"/>
<keyword id="KW-0963">Cytoplasm</keyword>
<keyword id="KW-0227">DNA damage</keyword>
<keyword id="KW-0233">DNA recombination</keyword>
<keyword id="KW-0234">DNA repair</keyword>
<keyword id="KW-0238">DNA-binding</keyword>
<keyword id="KW-0255">Endonuclease</keyword>
<keyword id="KW-0378">Hydrolase</keyword>
<keyword id="KW-0460">Magnesium</keyword>
<keyword id="KW-0479">Metal-binding</keyword>
<keyword id="KW-0540">Nuclease</keyword>
<keyword id="KW-1185">Reference proteome</keyword>